<keyword id="KW-0001">2Fe-2S</keyword>
<keyword id="KW-0004">4Fe-4S</keyword>
<keyword id="KW-0963">Cytoplasm</keyword>
<keyword id="KW-0408">Iron</keyword>
<keyword id="KW-0411">Iron-sulfur</keyword>
<keyword id="KW-0479">Metal-binding</keyword>
<keyword id="KW-0496">Mitochondrion</keyword>
<keyword id="KW-1185">Reference proteome</keyword>
<name>DRE2_CULQU</name>
<dbReference type="EMBL" id="DS232036">
    <property type="protein sequence ID" value="EDS32735.1"/>
    <property type="molecule type" value="Genomic_DNA"/>
</dbReference>
<dbReference type="RefSeq" id="XP_001850859.1">
    <property type="nucleotide sequence ID" value="XM_001850807.1"/>
</dbReference>
<dbReference type="FunCoup" id="B0WQ75">
    <property type="interactions" value="2174"/>
</dbReference>
<dbReference type="STRING" id="7176.B0WQ75"/>
<dbReference type="EnsemblMetazoa" id="CPIJ009364-RA">
    <property type="protein sequence ID" value="CPIJ009364-PA"/>
    <property type="gene ID" value="CPIJ009364"/>
</dbReference>
<dbReference type="KEGG" id="cqu:CpipJ_CPIJ009364"/>
<dbReference type="CTD" id="57019"/>
<dbReference type="VEuPathDB" id="VectorBase:CPIJ009364"/>
<dbReference type="VEuPathDB" id="VectorBase:CQUJHB007458"/>
<dbReference type="eggNOG" id="KOG4020">
    <property type="taxonomic scope" value="Eukaryota"/>
</dbReference>
<dbReference type="HOGENOM" id="CLU_064393_1_0_1"/>
<dbReference type="InParanoid" id="B0WQ75"/>
<dbReference type="OMA" id="GFINCRE"/>
<dbReference type="OrthoDB" id="311633at2759"/>
<dbReference type="PhylomeDB" id="B0WQ75"/>
<dbReference type="Proteomes" id="UP000002320">
    <property type="component" value="Unassembled WGS sequence"/>
</dbReference>
<dbReference type="GO" id="GO:0005758">
    <property type="term" value="C:mitochondrial intermembrane space"/>
    <property type="evidence" value="ECO:0007669"/>
    <property type="project" value="UniProtKB-SubCell"/>
</dbReference>
<dbReference type="GO" id="GO:0051537">
    <property type="term" value="F:2 iron, 2 sulfur cluster binding"/>
    <property type="evidence" value="ECO:0007669"/>
    <property type="project" value="UniProtKB-UniRule"/>
</dbReference>
<dbReference type="GO" id="GO:0051539">
    <property type="term" value="F:4 iron, 4 sulfur cluster binding"/>
    <property type="evidence" value="ECO:0007669"/>
    <property type="project" value="UniProtKB-KW"/>
</dbReference>
<dbReference type="GO" id="GO:0009055">
    <property type="term" value="F:electron transfer activity"/>
    <property type="evidence" value="ECO:0007669"/>
    <property type="project" value="UniProtKB-UniRule"/>
</dbReference>
<dbReference type="GO" id="GO:0046872">
    <property type="term" value="F:metal ion binding"/>
    <property type="evidence" value="ECO:0007669"/>
    <property type="project" value="UniProtKB-KW"/>
</dbReference>
<dbReference type="GO" id="GO:0016226">
    <property type="term" value="P:iron-sulfur cluster assembly"/>
    <property type="evidence" value="ECO:0007669"/>
    <property type="project" value="UniProtKB-UniRule"/>
</dbReference>
<dbReference type="Gene3D" id="3.40.50.150">
    <property type="entry name" value="Vaccinia Virus protein VP39"/>
    <property type="match status" value="1"/>
</dbReference>
<dbReference type="HAMAP" id="MF_03115">
    <property type="entry name" value="Anamorsin"/>
    <property type="match status" value="1"/>
</dbReference>
<dbReference type="InterPro" id="IPR007785">
    <property type="entry name" value="Anamorsin"/>
</dbReference>
<dbReference type="InterPro" id="IPR049011">
    <property type="entry name" value="Anamorsin_N_metazoan"/>
</dbReference>
<dbReference type="InterPro" id="IPR046408">
    <property type="entry name" value="CIAPIN1"/>
</dbReference>
<dbReference type="InterPro" id="IPR029063">
    <property type="entry name" value="SAM-dependent_MTases_sf"/>
</dbReference>
<dbReference type="PANTHER" id="PTHR13273">
    <property type="entry name" value="ANAMORSIN"/>
    <property type="match status" value="1"/>
</dbReference>
<dbReference type="PANTHER" id="PTHR13273:SF14">
    <property type="entry name" value="ANAMORSIN"/>
    <property type="match status" value="1"/>
</dbReference>
<dbReference type="Pfam" id="PF20922">
    <property type="entry name" value="Anamorsin_N"/>
    <property type="match status" value="1"/>
</dbReference>
<dbReference type="Pfam" id="PF05093">
    <property type="entry name" value="CIAPIN1"/>
    <property type="match status" value="1"/>
</dbReference>
<organism>
    <name type="scientific">Culex quinquefasciatus</name>
    <name type="common">Southern house mosquito</name>
    <name type="synonym">Culex pungens</name>
    <dbReference type="NCBI Taxonomy" id="7176"/>
    <lineage>
        <taxon>Eukaryota</taxon>
        <taxon>Metazoa</taxon>
        <taxon>Ecdysozoa</taxon>
        <taxon>Arthropoda</taxon>
        <taxon>Hexapoda</taxon>
        <taxon>Insecta</taxon>
        <taxon>Pterygota</taxon>
        <taxon>Neoptera</taxon>
        <taxon>Endopterygota</taxon>
        <taxon>Diptera</taxon>
        <taxon>Nematocera</taxon>
        <taxon>Culicoidea</taxon>
        <taxon>Culicidae</taxon>
        <taxon>Culicinae</taxon>
        <taxon>Culicini</taxon>
        <taxon>Culex</taxon>
        <taxon>Culex</taxon>
    </lineage>
</organism>
<sequence length="261" mass="27574">MNFVQENNQVLYIWGGTISADIEQEVNQLKSIPGVKVNVENAERVLLGGYGQSQFDIILANVSTGNSELVSHLLKLTKPKGKAVFKDDSAAGGAETVRANLLLSGFINIASAEGNVYIAEKPNYEIGSAAKLSLGGGANKAKVAAVWKLDVDDDGEAEERIDEDELLDEEDKVKPSAESLRVCGTTGKRKACKDCSCGLAEELDAESKGAAVAAAQSAKSSCGSCYLGDAFRCATCPYLGMPAFKPGEKIQLSDTQMQADV</sequence>
<proteinExistence type="inferred from homology"/>
<gene>
    <name type="ORF">CPIJ009364</name>
</gene>
<feature type="chain" id="PRO_0000392313" description="Anamorsin homolog">
    <location>
        <begin position="1"/>
        <end position="261"/>
    </location>
</feature>
<feature type="region of interest" description="N-terminal SAM-like domain" evidence="1">
    <location>
        <begin position="4"/>
        <end position="134"/>
    </location>
</feature>
<feature type="region of interest" description="Linker" evidence="1">
    <location>
        <begin position="134"/>
        <end position="173"/>
    </location>
</feature>
<feature type="region of interest" description="Fe-S binding site A" evidence="1">
    <location>
        <begin position="183"/>
        <end position="197"/>
    </location>
</feature>
<feature type="region of interest" description="Fe-S binding site B" evidence="1">
    <location>
        <begin position="222"/>
        <end position="236"/>
    </location>
</feature>
<feature type="short sequence motif" description="Cx2C motif 1" evidence="1">
    <location>
        <begin position="222"/>
        <end position="225"/>
    </location>
</feature>
<feature type="short sequence motif" description="Cx2C motif 2" evidence="1">
    <location>
        <begin position="233"/>
        <end position="236"/>
    </location>
</feature>
<feature type="binding site" evidence="1">
    <location>
        <position position="183"/>
    </location>
    <ligand>
        <name>[2Fe-2S] cluster</name>
        <dbReference type="ChEBI" id="CHEBI:190135"/>
    </ligand>
</feature>
<feature type="binding site" evidence="1">
    <location>
        <position position="192"/>
    </location>
    <ligand>
        <name>[2Fe-2S] cluster</name>
        <dbReference type="ChEBI" id="CHEBI:190135"/>
    </ligand>
</feature>
<feature type="binding site" evidence="1">
    <location>
        <position position="195"/>
    </location>
    <ligand>
        <name>[2Fe-2S] cluster</name>
        <dbReference type="ChEBI" id="CHEBI:190135"/>
    </ligand>
</feature>
<feature type="binding site" evidence="1">
    <location>
        <position position="197"/>
    </location>
    <ligand>
        <name>[2Fe-2S] cluster</name>
        <dbReference type="ChEBI" id="CHEBI:190135"/>
    </ligand>
</feature>
<feature type="binding site" evidence="1">
    <location>
        <position position="222"/>
    </location>
    <ligand>
        <name>[4Fe-4S] cluster</name>
        <dbReference type="ChEBI" id="CHEBI:49883"/>
    </ligand>
</feature>
<feature type="binding site" evidence="1">
    <location>
        <position position="225"/>
    </location>
    <ligand>
        <name>[4Fe-4S] cluster</name>
        <dbReference type="ChEBI" id="CHEBI:49883"/>
    </ligand>
</feature>
<feature type="binding site" evidence="1">
    <location>
        <position position="233"/>
    </location>
    <ligand>
        <name>[4Fe-4S] cluster</name>
        <dbReference type="ChEBI" id="CHEBI:49883"/>
    </ligand>
</feature>
<feature type="binding site" evidence="1">
    <location>
        <position position="236"/>
    </location>
    <ligand>
        <name>[4Fe-4S] cluster</name>
        <dbReference type="ChEBI" id="CHEBI:49883"/>
    </ligand>
</feature>
<accession>B0WQ75</accession>
<comment type="function">
    <text evidence="1">Component of the cytosolic iron-sulfur (Fe-S) protein assembly (CIA) machinery. Required for the maturation of extramitochondrial Fe-S proteins. Part of an electron transfer chain functioning in an early step of cytosolic Fe-S biogenesis, facilitating the de novo assembly of a [4Fe-4S] cluster on the cytosolic Fe-S scaffold complex. Electrons are transferred from NADPH via a FAD- and FMN-containing diflavin oxidoreductase. Together with the diflavin oxidoreductase, also required for the assembly of the diferric tyrosyl radical cofactor of ribonucleotide reductase (RNR), probably by providing electrons for reduction during radical cofactor maturation in the catalytic small subunit.</text>
</comment>
<comment type="cofactor">
    <cofactor evidence="1">
        <name>[2Fe-2S] cluster</name>
        <dbReference type="ChEBI" id="CHEBI:190135"/>
    </cofactor>
</comment>
<comment type="cofactor">
    <cofactor evidence="1">
        <name>[4Fe-4S] cluster</name>
        <dbReference type="ChEBI" id="CHEBI:49883"/>
    </cofactor>
</comment>
<comment type="subunit">
    <text evidence="1">Monomer.</text>
</comment>
<comment type="subcellular location">
    <subcellularLocation>
        <location evidence="1">Cytoplasm</location>
    </subcellularLocation>
    <subcellularLocation>
        <location evidence="1">Mitochondrion intermembrane space</location>
    </subcellularLocation>
</comment>
<comment type="domain">
    <text evidence="1">The C-terminal domain binds 2 Fe-S clusters but is otherwise mostly in an intrinsically disordered conformation.</text>
</comment>
<comment type="domain">
    <text evidence="1">The N-terminal domain has structural similarity with S-adenosyl-L-methionine-dependent methyltransferases, but does not bind S-adenosyl-L-methionine. It is required for correct assembly of the 2 Fe-S clusters.</text>
</comment>
<comment type="domain">
    <text evidence="1">The twin Cx2C motifs are involved in the recognition by the mitochondrial MIA40-ERV1 disulfide relay system. The formation of 2 disulfide bonds in the Cx2C motifs through dithiol/disulfide exchange reactions effectively traps the protein in the mitochondrial intermembrane space.</text>
</comment>
<comment type="similarity">
    <text evidence="1">Belongs to the anamorsin family.</text>
</comment>
<evidence type="ECO:0000255" key="1">
    <source>
        <dbReference type="HAMAP-Rule" id="MF_03115"/>
    </source>
</evidence>
<reference key="1">
    <citation type="submission" date="2007-03" db="EMBL/GenBank/DDBJ databases">
        <title>Annotation of Culex pipiens quinquefasciatus.</title>
        <authorList>
            <consortium name="The Broad Institute Genome Sequencing Platform"/>
            <person name="Atkinson P.W."/>
            <person name="Hemingway J."/>
            <person name="Christensen B.M."/>
            <person name="Higgs S."/>
            <person name="Kodira C.D."/>
            <person name="Hannick L.I."/>
            <person name="Megy K."/>
            <person name="O'Leary S.B."/>
            <person name="Pearson M."/>
            <person name="Haas B.J."/>
            <person name="Mauceli E."/>
            <person name="Wortman J.R."/>
            <person name="Lee N.H."/>
            <person name="Guigo R."/>
            <person name="Stanke M."/>
            <person name="Alvarado L."/>
            <person name="Amedeo P."/>
            <person name="Antoine C.H."/>
            <person name="Arensburger P."/>
            <person name="Bidwell S.L."/>
            <person name="Crawford M."/>
            <person name="Camaro F."/>
            <person name="Devon K."/>
            <person name="Engels R."/>
            <person name="Hammond M."/>
            <person name="Howarth C."/>
            <person name="Koehrsen M."/>
            <person name="Lawson D."/>
            <person name="Montgomery P."/>
            <person name="Nene V."/>
            <person name="Nusbaum C."/>
            <person name="Puiu D."/>
            <person name="Romero-Severson J."/>
            <person name="Severson D.W."/>
            <person name="Shumway M."/>
            <person name="Sisk P."/>
            <person name="Stolte C."/>
            <person name="Zeng Q."/>
            <person name="Eisenstadt E."/>
            <person name="Fraser-Liggett C.M."/>
            <person name="Strausberg R."/>
            <person name="Galagan J."/>
            <person name="Birren B."/>
            <person name="Collins F.H."/>
        </authorList>
    </citation>
    <scope>NUCLEOTIDE SEQUENCE [LARGE SCALE GENOMIC DNA]</scope>
    <source>
        <strain>JHB</strain>
    </source>
</reference>
<protein>
    <recommendedName>
        <fullName evidence="1">Anamorsin homolog</fullName>
    </recommendedName>
    <alternativeName>
        <fullName evidence="1">Fe-S cluster assembly protein DRE2 homolog</fullName>
    </alternativeName>
</protein>